<keyword id="KW-0235">DNA replication</keyword>
<keyword id="KW-0240">DNA-directed RNA polymerase</keyword>
<keyword id="KW-0460">Magnesium</keyword>
<keyword id="KW-0464">Manganese</keyword>
<keyword id="KW-0479">Metal-binding</keyword>
<keyword id="KW-0548">Nucleotidyltransferase</keyword>
<keyword id="KW-0639">Primosome</keyword>
<keyword id="KW-1185">Reference proteome</keyword>
<keyword id="KW-0804">Transcription</keyword>
<keyword id="KW-0808">Transferase</keyword>
<comment type="function">
    <text evidence="1">Catalytic subunit of DNA primase, an RNA polymerase that catalyzes the synthesis of short RNA molecules used as primers for DNA polymerase during DNA replication. The small subunit contains the primase catalytic core and has DNA synthesis activity on its own. Binding to the large subunit stabilizes and modulates the activity, increasing the rate of DNA synthesis while decreasing the length of the DNA fragments, and conferring RNA synthesis capability. The DNA polymerase activity may enable DNA primase to also catalyze primer extension after primer synthesis. May also play a role in DNA repair.</text>
</comment>
<comment type="cofactor">
    <cofactor evidence="1">
        <name>Mg(2+)</name>
        <dbReference type="ChEBI" id="CHEBI:18420"/>
    </cofactor>
    <cofactor evidence="1">
        <name>Mn(2+)</name>
        <dbReference type="ChEBI" id="CHEBI:29035"/>
    </cofactor>
</comment>
<comment type="subunit">
    <text evidence="1">Heterodimer of a small subunit (PriS) and a large subunit (PriL).</text>
</comment>
<comment type="similarity">
    <text evidence="1">Belongs to the eukaryotic-type primase small subunit family.</text>
</comment>
<accession>Q5V554</accession>
<reference key="1">
    <citation type="journal article" date="2004" name="Genome Res.">
        <title>Genome sequence of Haloarcula marismortui: a halophilic archaeon from the Dead Sea.</title>
        <authorList>
            <person name="Baliga N.S."/>
            <person name="Bonneau R."/>
            <person name="Facciotti M.T."/>
            <person name="Pan M."/>
            <person name="Glusman G."/>
            <person name="Deutsch E.W."/>
            <person name="Shannon P."/>
            <person name="Chiu Y."/>
            <person name="Weng R.S."/>
            <person name="Gan R.R."/>
            <person name="Hung P."/>
            <person name="Date S.V."/>
            <person name="Marcotte E."/>
            <person name="Hood L."/>
            <person name="Ng W.V."/>
        </authorList>
    </citation>
    <scope>NUCLEOTIDE SEQUENCE [LARGE SCALE GENOMIC DNA]</scope>
    <source>
        <strain>ATCC 43049 / DSM 3752 / JCM 8966 / VKM B-1809</strain>
    </source>
</reference>
<organism>
    <name type="scientific">Haloarcula marismortui (strain ATCC 43049 / DSM 3752 / JCM 8966 / VKM B-1809)</name>
    <name type="common">Halobacterium marismortui</name>
    <dbReference type="NCBI Taxonomy" id="272569"/>
    <lineage>
        <taxon>Archaea</taxon>
        <taxon>Methanobacteriati</taxon>
        <taxon>Methanobacteriota</taxon>
        <taxon>Stenosarchaea group</taxon>
        <taxon>Halobacteria</taxon>
        <taxon>Halobacteriales</taxon>
        <taxon>Haloarculaceae</taxon>
        <taxon>Haloarcula</taxon>
    </lineage>
</organism>
<evidence type="ECO:0000255" key="1">
    <source>
        <dbReference type="HAMAP-Rule" id="MF_00700"/>
    </source>
</evidence>
<gene>
    <name evidence="1" type="primary">priS</name>
    <name type="synonym">pri1</name>
    <name type="synonym">priA</name>
    <name type="ordered locus">rrnAC0292</name>
</gene>
<dbReference type="EC" id="2.7.7.-" evidence="1"/>
<dbReference type="EMBL" id="AY596297">
    <property type="protein sequence ID" value="AAV45348.1"/>
    <property type="molecule type" value="Genomic_DNA"/>
</dbReference>
<dbReference type="RefSeq" id="WP_011222943.1">
    <property type="nucleotide sequence ID" value="NZ_CP039138.1"/>
</dbReference>
<dbReference type="SMR" id="Q5V554"/>
<dbReference type="STRING" id="272569.rrnAC0292"/>
<dbReference type="PaxDb" id="272569-rrnAC0292"/>
<dbReference type="EnsemblBacteria" id="AAV45348">
    <property type="protein sequence ID" value="AAV45348"/>
    <property type="gene ID" value="rrnAC0292"/>
</dbReference>
<dbReference type="GeneID" id="40154586"/>
<dbReference type="KEGG" id="hma:rrnAC0292"/>
<dbReference type="PATRIC" id="fig|272569.17.peg.1086"/>
<dbReference type="eggNOG" id="arCOG04110">
    <property type="taxonomic scope" value="Archaea"/>
</dbReference>
<dbReference type="HOGENOM" id="CLU_056123_1_0_2"/>
<dbReference type="Proteomes" id="UP000001169">
    <property type="component" value="Chromosome I"/>
</dbReference>
<dbReference type="GO" id="GO:0000428">
    <property type="term" value="C:DNA-directed RNA polymerase complex"/>
    <property type="evidence" value="ECO:0007669"/>
    <property type="project" value="UniProtKB-KW"/>
</dbReference>
<dbReference type="GO" id="GO:1990077">
    <property type="term" value="C:primosome complex"/>
    <property type="evidence" value="ECO:0007669"/>
    <property type="project" value="UniProtKB-KW"/>
</dbReference>
<dbReference type="GO" id="GO:0003899">
    <property type="term" value="F:DNA-directed RNA polymerase activity"/>
    <property type="evidence" value="ECO:0007669"/>
    <property type="project" value="InterPro"/>
</dbReference>
<dbReference type="GO" id="GO:0046872">
    <property type="term" value="F:metal ion binding"/>
    <property type="evidence" value="ECO:0007669"/>
    <property type="project" value="UniProtKB-KW"/>
</dbReference>
<dbReference type="GO" id="GO:0006269">
    <property type="term" value="P:DNA replication, synthesis of primer"/>
    <property type="evidence" value="ECO:0007669"/>
    <property type="project" value="UniProtKB-UniRule"/>
</dbReference>
<dbReference type="CDD" id="cd04860">
    <property type="entry name" value="AE_Prim_S"/>
    <property type="match status" value="1"/>
</dbReference>
<dbReference type="Gene3D" id="3.90.920.10">
    <property type="entry name" value="DNA primase, PRIM domain"/>
    <property type="match status" value="1"/>
</dbReference>
<dbReference type="HAMAP" id="MF_00700">
    <property type="entry name" value="DNA_primase_sml_arc"/>
    <property type="match status" value="1"/>
</dbReference>
<dbReference type="InterPro" id="IPR002755">
    <property type="entry name" value="DNA_primase_S"/>
</dbReference>
<dbReference type="InterPro" id="IPR014052">
    <property type="entry name" value="DNA_primase_ssu_euk/arc"/>
</dbReference>
<dbReference type="InterPro" id="IPR023639">
    <property type="entry name" value="DNA_primase_ssu_PriS"/>
</dbReference>
<dbReference type="NCBIfam" id="TIGR00335">
    <property type="entry name" value="primase_sml"/>
    <property type="match status" value="1"/>
</dbReference>
<dbReference type="NCBIfam" id="NF001639">
    <property type="entry name" value="PRK00419.1-1"/>
    <property type="match status" value="1"/>
</dbReference>
<dbReference type="PANTHER" id="PTHR10536">
    <property type="entry name" value="DNA PRIMASE SMALL SUBUNIT"/>
    <property type="match status" value="1"/>
</dbReference>
<dbReference type="Pfam" id="PF01896">
    <property type="entry name" value="DNA_primase_S"/>
    <property type="match status" value="1"/>
</dbReference>
<dbReference type="SUPFAM" id="SSF56747">
    <property type="entry name" value="Prim-pol domain"/>
    <property type="match status" value="1"/>
</dbReference>
<proteinExistence type="inferred from homology"/>
<protein>
    <recommendedName>
        <fullName evidence="1">DNA primase small subunit PriS</fullName>
        <ecNumber evidence="1">2.7.7.-</ecNumber>
    </recommendedName>
</protein>
<feature type="chain" id="PRO_0000046739" description="DNA primase small subunit PriS">
    <location>
        <begin position="1"/>
        <end position="392"/>
    </location>
</feature>
<feature type="active site" evidence="1">
    <location>
        <position position="98"/>
    </location>
</feature>
<feature type="active site" evidence="1">
    <location>
        <position position="100"/>
    </location>
</feature>
<feature type="active site" evidence="1">
    <location>
        <position position="295"/>
    </location>
</feature>
<name>PRIS_HALMA</name>
<sequence length="392" mass="43653">MEERTRAYLRGRFGDHYRQASVTPPPAANEREWGFIPWTEGPGETMVRHRSLLDLGEIEDFLGRRKPRHVYFSAGRYDEPSASTMSDKGWRSSDLVFDLDADHLPSVVLGEDSYAEMLAKCKDALRRLLDFLEDDFGFDDLTIVFSGGRGYHVHVRDERIRHLERDARREVVDYVRGIGLEFDELVDEESVAGTAGRSSPAQKRTLSTEGGWSARAHRHMLAVVDDLLAMEEADALEQLQEYDGIGEGKATAALNAARSNYEQLEAGNIDVHPAFYQLAKILLHEVVAADNAPIDEPVTTDTNRLIRLPGSLHGGSGLEVQRIDRDDLDAFDPLVDPVPETFRGHDITVEVTDGGLVELDGDSFTLEAGNQTVPEHVGVFLMARGRAEKGKE</sequence>